<reference key="1">
    <citation type="journal article" date="2012" name="Exp. Cell Res.">
        <title>A novel proapoptotic gene PANO encodes a post-translational modulator of the tumor suppressor p14ARF.</title>
        <authorList>
            <person name="Watari A."/>
            <person name="Li Y."/>
            <person name="Higashiyama S."/>
            <person name="Yutsudo M."/>
        </authorList>
    </citation>
    <scope>NUCLEOTIDE SEQUENCE [MRNA]</scope>
    <scope>FUNCTION</scope>
    <scope>SUBCELLULAR LOCATION</scope>
    <scope>TISSUE SPECIFICITY</scope>
    <scope>INDUCTION</scope>
</reference>
<reference key="2">
    <citation type="journal article" date="2006" name="Nature">
        <title>Human chromosome 11 DNA sequence and analysis including novel gene identification.</title>
        <authorList>
            <person name="Taylor T.D."/>
            <person name="Noguchi H."/>
            <person name="Totoki Y."/>
            <person name="Toyoda A."/>
            <person name="Kuroki Y."/>
            <person name="Dewar K."/>
            <person name="Lloyd C."/>
            <person name="Itoh T."/>
            <person name="Takeda T."/>
            <person name="Kim D.-W."/>
            <person name="She X."/>
            <person name="Barlow K.F."/>
            <person name="Bloom T."/>
            <person name="Bruford E."/>
            <person name="Chang J.L."/>
            <person name="Cuomo C.A."/>
            <person name="Eichler E."/>
            <person name="FitzGerald M.G."/>
            <person name="Jaffe D.B."/>
            <person name="LaButti K."/>
            <person name="Nicol R."/>
            <person name="Park H.-S."/>
            <person name="Seaman C."/>
            <person name="Sougnez C."/>
            <person name="Yang X."/>
            <person name="Zimmer A.R."/>
            <person name="Zody M.C."/>
            <person name="Birren B.W."/>
            <person name="Nusbaum C."/>
            <person name="Fujiyama A."/>
            <person name="Hattori M."/>
            <person name="Rogers J."/>
            <person name="Lander E.S."/>
            <person name="Sakaki Y."/>
        </authorList>
    </citation>
    <scope>NUCLEOTIDE SEQUENCE [LARGE SCALE GENOMIC DNA]</scope>
</reference>
<protein>
    <recommendedName>
        <fullName evidence="3 4">Proapoptotic nucleolar protein 1</fullName>
    </recommendedName>
</protein>
<accession>I0J062</accession>
<evidence type="ECO:0000256" key="1">
    <source>
        <dbReference type="SAM" id="MobiDB-lite"/>
    </source>
</evidence>
<evidence type="ECO:0000269" key="2">
    <source>
    </source>
</evidence>
<evidence type="ECO:0000303" key="3">
    <source>
    </source>
</evidence>
<evidence type="ECO:0000312" key="4">
    <source>
        <dbReference type="HGNC" id="HGNC:51237"/>
    </source>
</evidence>
<keyword id="KW-0053">Apoptosis</keyword>
<keyword id="KW-0539">Nucleus</keyword>
<keyword id="KW-1185">Reference proteome</keyword>
<keyword id="KW-0043">Tumor suppressor</keyword>
<feature type="chain" id="PRO_0000431904" description="Proapoptotic nucleolar protein 1">
    <location>
        <begin position="1"/>
        <end position="215"/>
    </location>
</feature>
<feature type="region of interest" description="Disordered" evidence="1">
    <location>
        <begin position="35"/>
        <end position="215"/>
    </location>
</feature>
<feature type="region of interest" description="Necessary for nucleolar localization" evidence="2">
    <location>
        <begin position="185"/>
        <end position="215"/>
    </location>
</feature>
<feature type="compositionally biased region" description="Pro residues" evidence="1">
    <location>
        <begin position="169"/>
        <end position="180"/>
    </location>
</feature>
<name>PANO1_HUMAN</name>
<dbReference type="EMBL" id="AB430851">
    <property type="protein sequence ID" value="BAM10911.1"/>
    <property type="molecule type" value="mRNA"/>
</dbReference>
<dbReference type="EMBL" id="AP006621">
    <property type="status" value="NOT_ANNOTATED_CDS"/>
    <property type="molecule type" value="Genomic_DNA"/>
</dbReference>
<dbReference type="RefSeq" id="NP_001280096.1">
    <property type="nucleotide sequence ID" value="NM_001293167.1"/>
</dbReference>
<dbReference type="RefSeq" id="XP_034607700.1">
    <property type="nucleotide sequence ID" value="XM_034751809.2"/>
</dbReference>
<dbReference type="RefSeq" id="XP_047301830.1">
    <property type="nucleotide sequence ID" value="XM_047445874.1"/>
</dbReference>
<dbReference type="FunCoup" id="I0J062">
    <property type="interactions" value="14"/>
</dbReference>
<dbReference type="GlyGen" id="I0J062">
    <property type="glycosylation" value="1 site"/>
</dbReference>
<dbReference type="BioMuta" id="PANO1"/>
<dbReference type="jPOST" id="I0J062"/>
<dbReference type="PaxDb" id="9606-ENSP00000479258"/>
<dbReference type="DNASU" id="101927423"/>
<dbReference type="Ensembl" id="ENST00000678030.1">
    <property type="protein sequence ID" value="ENSP00000503591.1"/>
    <property type="gene ID" value="ENSG00000288675.1"/>
</dbReference>
<dbReference type="GeneID" id="101927423"/>
<dbReference type="UCSC" id="uc057xnb.1">
    <property type="organism name" value="human"/>
</dbReference>
<dbReference type="AGR" id="HGNC:51237"/>
<dbReference type="CTD" id="101927423"/>
<dbReference type="DisGeNET" id="101927423"/>
<dbReference type="GeneCards" id="PANO1"/>
<dbReference type="HGNC" id="HGNC:51237">
    <property type="gene designation" value="PANO1"/>
</dbReference>
<dbReference type="HPA" id="ENSG00000288675">
    <property type="expression patterns" value="Tissue enhanced (pancreas)"/>
</dbReference>
<dbReference type="MIM" id="620541">
    <property type="type" value="gene"/>
</dbReference>
<dbReference type="neXtProt" id="NX_I0J062"/>
<dbReference type="VEuPathDB" id="HostDB:ENSG00000288675"/>
<dbReference type="GeneTree" id="ENSGT00910000147257"/>
<dbReference type="HOGENOM" id="CLU_1282854_0_0_1"/>
<dbReference type="InParanoid" id="I0J062"/>
<dbReference type="OMA" id="PRTCPQM"/>
<dbReference type="OrthoDB" id="9539448at2759"/>
<dbReference type="PAN-GO" id="I0J062">
    <property type="GO annotations" value="1 GO annotation based on evolutionary models"/>
</dbReference>
<dbReference type="PathwayCommons" id="I0J062"/>
<dbReference type="BioGRID-ORCS" id="101927423">
    <property type="hits" value="5 hits in 115 CRISPR screens"/>
</dbReference>
<dbReference type="CD-CODE" id="91857CE7">
    <property type="entry name" value="Nucleolus"/>
</dbReference>
<dbReference type="GenomeRNAi" id="101927423"/>
<dbReference type="Pharos" id="I0J062">
    <property type="development level" value="Tdark"/>
</dbReference>
<dbReference type="PRO" id="PR:I0J062"/>
<dbReference type="Proteomes" id="UP000005640">
    <property type="component" value="Chromosome 11"/>
</dbReference>
<dbReference type="RNAct" id="I0J062">
    <property type="molecule type" value="protein"/>
</dbReference>
<dbReference type="GO" id="GO:0005730">
    <property type="term" value="C:nucleolus"/>
    <property type="evidence" value="ECO:0000314"/>
    <property type="project" value="UniProtKB"/>
</dbReference>
<dbReference type="GO" id="GO:0006915">
    <property type="term" value="P:apoptotic process"/>
    <property type="evidence" value="ECO:0007669"/>
    <property type="project" value="UniProtKB-KW"/>
</dbReference>
<dbReference type="GO" id="GO:0032435">
    <property type="term" value="P:negative regulation of proteasomal ubiquitin-dependent protein catabolic process"/>
    <property type="evidence" value="ECO:0000315"/>
    <property type="project" value="UniProtKB"/>
</dbReference>
<dbReference type="GO" id="GO:0043065">
    <property type="term" value="P:positive regulation of apoptotic process"/>
    <property type="evidence" value="ECO:0000314"/>
    <property type="project" value="UniProtKB"/>
</dbReference>
<dbReference type="GO" id="GO:0031647">
    <property type="term" value="P:regulation of protein stability"/>
    <property type="evidence" value="ECO:0000314"/>
    <property type="project" value="UniProtKB"/>
</dbReference>
<gene>
    <name evidence="4" type="primary">PANO1</name>
    <name evidence="3" type="synonym">PANO</name>
</gene>
<organism>
    <name type="scientific">Homo sapiens</name>
    <name type="common">Human</name>
    <dbReference type="NCBI Taxonomy" id="9606"/>
    <lineage>
        <taxon>Eukaryota</taxon>
        <taxon>Metazoa</taxon>
        <taxon>Chordata</taxon>
        <taxon>Craniata</taxon>
        <taxon>Vertebrata</taxon>
        <taxon>Euteleostomi</taxon>
        <taxon>Mammalia</taxon>
        <taxon>Eutheria</taxon>
        <taxon>Euarchontoglires</taxon>
        <taxon>Primates</taxon>
        <taxon>Haplorrhini</taxon>
        <taxon>Catarrhini</taxon>
        <taxon>Hominidae</taxon>
        <taxon>Homo</taxon>
    </lineage>
</organism>
<proteinExistence type="evidence at transcript level"/>
<comment type="function">
    <text evidence="2">Apoptosis-inducing protein that modulates the tumor suppressor function of CDKN2A/p14ARF. Enhances the stability of CDKN2A/p14ARF protein by protecting it from degradation. May act as a tumor suppressor (PubMed:22094112).</text>
</comment>
<comment type="subcellular location">
    <subcellularLocation>
        <location evidence="2">Nucleus</location>
        <location evidence="2">Nucleolus</location>
    </subcellularLocation>
    <text evidence="2">Colocalizes with CDKN2A/p14ARF in the nucleolus.</text>
</comment>
<comment type="tissue specificity">
    <text evidence="2">Widely expressed.</text>
</comment>
<comment type="induction">
    <text evidence="2">Up-regulated after serum withdrawal.</text>
</comment>
<sequence>MGVRLRVWPAAPHSISRCPRPLGAVLSILLAGGSRKGTPTARCLGQRTKEKRVGGRSLRSEAGSGPCPTAGAQPTAPSSAWPPRLRPRTCPQMSGELPRVRPTRVGLSSLGSGPGHPPSGTRMCGERARNRRGRARRLTPEQPRIGASAGPGPPLPPARPRCSGSCHLPRPPQHLSPPQPGRVRMGAAEGSRRADTHHARRRRRARLPAPRSAST</sequence>